<proteinExistence type="evidence at transcript level"/>
<reference key="1">
    <citation type="submission" date="2006-08" db="EMBL/GenBank/DDBJ databases">
        <authorList>
            <consortium name="NIH - Mammalian Gene Collection (MGC) project"/>
        </authorList>
    </citation>
    <scope>NUCLEOTIDE SEQUENCE [LARGE SCALE MRNA]</scope>
    <source>
        <strain>Hereford</strain>
        <tissue>Thalamus</tissue>
    </source>
</reference>
<comment type="function">
    <text evidence="1">Bifunctional enzyme that catalyzes the enolization of 2,3-diketo-5-methylthiopentyl-1-phosphate (DK-MTP-1-P) into the intermediate 2-hydroxy-3-keto-5-methylthiopentenyl-1-phosphate (HK-MTPenyl-1-P), which is then dephosphorylated to form the acireductone 1,2-dihydroxy-3-keto-5-methylthiopentene (DHK-MTPene).</text>
</comment>
<comment type="catalytic activity">
    <reaction evidence="1">
        <text>5-methylsulfanyl-2,3-dioxopentyl phosphate + H2O = 1,2-dihydroxy-5-(methylsulfanyl)pent-1-en-3-one + phosphate</text>
        <dbReference type="Rhea" id="RHEA:21700"/>
        <dbReference type="ChEBI" id="CHEBI:15377"/>
        <dbReference type="ChEBI" id="CHEBI:43474"/>
        <dbReference type="ChEBI" id="CHEBI:49252"/>
        <dbReference type="ChEBI" id="CHEBI:58828"/>
        <dbReference type="EC" id="3.1.3.77"/>
    </reaction>
</comment>
<comment type="cofactor">
    <cofactor evidence="1">
        <name>Mg(2+)</name>
        <dbReference type="ChEBI" id="CHEBI:18420"/>
    </cofactor>
    <text evidence="1">Binds 1 Mg(2+) ion per subunit.</text>
</comment>
<comment type="pathway">
    <text evidence="1">Amino-acid biosynthesis; L-methionine biosynthesis via salvage pathway; L-methionine from S-methyl-5-thio-alpha-D-ribose 1-phosphate: step 3/6.</text>
</comment>
<comment type="pathway">
    <text evidence="1">Amino-acid biosynthesis; L-methionine biosynthesis via salvage pathway; L-methionine from S-methyl-5-thio-alpha-D-ribose 1-phosphate: step 4/6.</text>
</comment>
<comment type="subunit">
    <text evidence="1">Monomer.</text>
</comment>
<comment type="subcellular location">
    <subcellularLocation>
        <location evidence="1">Cytoplasm</location>
    </subcellularLocation>
    <subcellularLocation>
        <location evidence="1">Nucleus</location>
    </subcellularLocation>
</comment>
<comment type="similarity">
    <text evidence="1">Belongs to the HAD-like hydrolase superfamily. MasA/MtnC family.</text>
</comment>
<protein>
    <recommendedName>
        <fullName evidence="1">Enolase-phosphatase E1</fullName>
        <ecNumber evidence="1">3.1.3.77</ecNumber>
    </recommendedName>
    <alternativeName>
        <fullName evidence="1">2,3-diketo-5-methylthio-1-phosphopentane phosphatase</fullName>
    </alternativeName>
    <alternativeName>
        <fullName evidence="1">MASA homolog</fullName>
    </alternativeName>
</protein>
<evidence type="ECO:0000255" key="1">
    <source>
        <dbReference type="HAMAP-Rule" id="MF_03117"/>
    </source>
</evidence>
<feature type="chain" id="PRO_0000254006" description="Enolase-phosphatase E1">
    <location>
        <begin position="1"/>
        <end position="261"/>
    </location>
</feature>
<feature type="binding site" evidence="1">
    <location>
        <position position="16"/>
    </location>
    <ligand>
        <name>Mg(2+)</name>
        <dbReference type="ChEBI" id="CHEBI:18420"/>
    </ligand>
</feature>
<feature type="binding site" evidence="1">
    <location>
        <position position="18"/>
    </location>
    <ligand>
        <name>Mg(2+)</name>
        <dbReference type="ChEBI" id="CHEBI:18420"/>
    </ligand>
</feature>
<feature type="binding site" evidence="1">
    <location>
        <begin position="153"/>
        <end position="154"/>
    </location>
    <ligand>
        <name>substrate</name>
    </ligand>
</feature>
<feature type="binding site" evidence="1">
    <location>
        <position position="187"/>
    </location>
    <ligand>
        <name>substrate</name>
    </ligand>
</feature>
<feature type="binding site" evidence="1">
    <location>
        <position position="212"/>
    </location>
    <ligand>
        <name>Mg(2+)</name>
        <dbReference type="ChEBI" id="CHEBI:18420"/>
    </ligand>
</feature>
<accession>Q0VD27</accession>
<dbReference type="EC" id="3.1.3.77" evidence="1"/>
<dbReference type="EMBL" id="BC119871">
    <property type="protein sequence ID" value="AAI19872.1"/>
    <property type="molecule type" value="mRNA"/>
</dbReference>
<dbReference type="RefSeq" id="NP_001069343.1">
    <property type="nucleotide sequence ID" value="NM_001075875.1"/>
</dbReference>
<dbReference type="SMR" id="Q0VD27"/>
<dbReference type="FunCoup" id="Q0VD27">
    <property type="interactions" value="4035"/>
</dbReference>
<dbReference type="STRING" id="9913.ENSBTAP00000019702"/>
<dbReference type="PaxDb" id="9913-ENSBTAP00000019702"/>
<dbReference type="GeneID" id="525563"/>
<dbReference type="KEGG" id="bta:525563"/>
<dbReference type="CTD" id="58478"/>
<dbReference type="VEuPathDB" id="HostDB:ENSBTAG00000014805"/>
<dbReference type="eggNOG" id="KOG2630">
    <property type="taxonomic scope" value="Eukaryota"/>
</dbReference>
<dbReference type="HOGENOM" id="CLU_023273_0_0_1"/>
<dbReference type="InParanoid" id="Q0VD27"/>
<dbReference type="OMA" id="LQGMVWE"/>
<dbReference type="OrthoDB" id="272500at2759"/>
<dbReference type="TreeFam" id="TF105939"/>
<dbReference type="Reactome" id="R-BTA-1237112">
    <property type="pathway name" value="Methionine salvage pathway"/>
</dbReference>
<dbReference type="UniPathway" id="UPA00904">
    <property type="reaction ID" value="UER00876"/>
</dbReference>
<dbReference type="UniPathway" id="UPA00904">
    <property type="reaction ID" value="UER00877"/>
</dbReference>
<dbReference type="Proteomes" id="UP000009136">
    <property type="component" value="Chromosome 6"/>
</dbReference>
<dbReference type="Bgee" id="ENSBTAG00000014805">
    <property type="expression patterns" value="Expressed in Ammon's horn and 105 other cell types or tissues"/>
</dbReference>
<dbReference type="GO" id="GO:0005737">
    <property type="term" value="C:cytoplasm"/>
    <property type="evidence" value="ECO:0007669"/>
    <property type="project" value="UniProtKB-SubCell"/>
</dbReference>
<dbReference type="GO" id="GO:0005634">
    <property type="term" value="C:nucleus"/>
    <property type="evidence" value="ECO:0007669"/>
    <property type="project" value="UniProtKB-SubCell"/>
</dbReference>
<dbReference type="GO" id="GO:0043874">
    <property type="term" value="F:acireductone synthase activity"/>
    <property type="evidence" value="ECO:0000250"/>
    <property type="project" value="UniProtKB"/>
</dbReference>
<dbReference type="GO" id="GO:0000287">
    <property type="term" value="F:magnesium ion binding"/>
    <property type="evidence" value="ECO:0007669"/>
    <property type="project" value="UniProtKB-UniRule"/>
</dbReference>
<dbReference type="GO" id="GO:0019509">
    <property type="term" value="P:L-methionine salvage from methylthioadenosine"/>
    <property type="evidence" value="ECO:0000250"/>
    <property type="project" value="UniProtKB"/>
</dbReference>
<dbReference type="CDD" id="cd01629">
    <property type="entry name" value="HAD_EP"/>
    <property type="match status" value="1"/>
</dbReference>
<dbReference type="FunFam" id="1.10.720.60:FF:000002">
    <property type="entry name" value="Enolase-phosphatase E1"/>
    <property type="match status" value="1"/>
</dbReference>
<dbReference type="FunFam" id="3.40.50.1000:FF:000102">
    <property type="entry name" value="Enolase-phosphatase E1"/>
    <property type="match status" value="1"/>
</dbReference>
<dbReference type="Gene3D" id="1.10.720.60">
    <property type="match status" value="1"/>
</dbReference>
<dbReference type="Gene3D" id="3.40.50.1000">
    <property type="entry name" value="HAD superfamily/HAD-like"/>
    <property type="match status" value="1"/>
</dbReference>
<dbReference type="HAMAP" id="MF_01681">
    <property type="entry name" value="Salvage_MtnC"/>
    <property type="match status" value="1"/>
</dbReference>
<dbReference type="HAMAP" id="MF_03117">
    <property type="entry name" value="Salvage_MtnC_euk"/>
    <property type="match status" value="1"/>
</dbReference>
<dbReference type="InterPro" id="IPR023943">
    <property type="entry name" value="Enolase-ppase_E1"/>
</dbReference>
<dbReference type="InterPro" id="IPR027511">
    <property type="entry name" value="ENOPH1_eukaryotes"/>
</dbReference>
<dbReference type="InterPro" id="IPR036412">
    <property type="entry name" value="HAD-like_sf"/>
</dbReference>
<dbReference type="InterPro" id="IPR006439">
    <property type="entry name" value="HAD-SF_hydro_IA"/>
</dbReference>
<dbReference type="InterPro" id="IPR023214">
    <property type="entry name" value="HAD_sf"/>
</dbReference>
<dbReference type="NCBIfam" id="TIGR01691">
    <property type="entry name" value="enolase-ppase"/>
    <property type="match status" value="1"/>
</dbReference>
<dbReference type="NCBIfam" id="TIGR01549">
    <property type="entry name" value="HAD-SF-IA-v1"/>
    <property type="match status" value="1"/>
</dbReference>
<dbReference type="PANTHER" id="PTHR20371">
    <property type="entry name" value="ENOLASE-PHOSPHATASE E1"/>
    <property type="match status" value="1"/>
</dbReference>
<dbReference type="PANTHER" id="PTHR20371:SF1">
    <property type="entry name" value="ENOLASE-PHOSPHATASE E1"/>
    <property type="match status" value="1"/>
</dbReference>
<dbReference type="Pfam" id="PF00702">
    <property type="entry name" value="Hydrolase"/>
    <property type="match status" value="1"/>
</dbReference>
<dbReference type="SFLD" id="SFLDG01133">
    <property type="entry name" value="C1.5.4:_Enolase-phosphatase_Li"/>
    <property type="match status" value="1"/>
</dbReference>
<dbReference type="SFLD" id="SFLDF00044">
    <property type="entry name" value="enolase-phosphatase"/>
    <property type="match status" value="1"/>
</dbReference>
<dbReference type="SUPFAM" id="SSF56784">
    <property type="entry name" value="HAD-like"/>
    <property type="match status" value="1"/>
</dbReference>
<gene>
    <name evidence="1" type="primary">ENOPH1</name>
    <name evidence="1" type="synonym">MASA</name>
</gene>
<sequence>MVVLSVPAEVTVILLDIEGTTTPIAFVKDILFPYVKENVEEYLQAHWEEEECQQDVRLLRKQAEEDSHLDGAVPIPAASGNGADDPQWMIQAVVDNVYWQMSLDRKTTALKQLQGHMWRAAFKAGHMKAEFFEDVVPAVRKWREAGMKVYVYSSGSVEAQKLLFGHSTEGDILELVDGHFDTKIGHKVESESYQKIASSIGCSTNNILFLTDVSREASAAEEAGVHVAVVVRPGNAGLTDDEKTHFSLITSFSELYLPSST</sequence>
<keyword id="KW-0028">Amino-acid biosynthesis</keyword>
<keyword id="KW-0963">Cytoplasm</keyword>
<keyword id="KW-0378">Hydrolase</keyword>
<keyword id="KW-0460">Magnesium</keyword>
<keyword id="KW-0479">Metal-binding</keyword>
<keyword id="KW-0486">Methionine biosynthesis</keyword>
<keyword id="KW-0539">Nucleus</keyword>
<keyword id="KW-1185">Reference proteome</keyword>
<organism>
    <name type="scientific">Bos taurus</name>
    <name type="common">Bovine</name>
    <dbReference type="NCBI Taxonomy" id="9913"/>
    <lineage>
        <taxon>Eukaryota</taxon>
        <taxon>Metazoa</taxon>
        <taxon>Chordata</taxon>
        <taxon>Craniata</taxon>
        <taxon>Vertebrata</taxon>
        <taxon>Euteleostomi</taxon>
        <taxon>Mammalia</taxon>
        <taxon>Eutheria</taxon>
        <taxon>Laurasiatheria</taxon>
        <taxon>Artiodactyla</taxon>
        <taxon>Ruminantia</taxon>
        <taxon>Pecora</taxon>
        <taxon>Bovidae</taxon>
        <taxon>Bovinae</taxon>
        <taxon>Bos</taxon>
    </lineage>
</organism>
<name>ENOPH_BOVIN</name>